<feature type="chain" id="PRO_0000285425" description="Homeobox protein Hox-B1">
    <location>
        <begin position="1"/>
        <end position="301"/>
    </location>
</feature>
<feature type="DNA-binding region" description="Homeobox" evidence="2">
    <location>
        <begin position="203"/>
        <end position="262"/>
    </location>
</feature>
<feature type="region of interest" description="Disordered" evidence="3">
    <location>
        <begin position="19"/>
        <end position="77"/>
    </location>
</feature>
<feature type="region of interest" description="Disordered" evidence="3">
    <location>
        <begin position="127"/>
        <end position="149"/>
    </location>
</feature>
<feature type="region of interest" description="Disordered" evidence="3">
    <location>
        <begin position="189"/>
        <end position="208"/>
    </location>
</feature>
<feature type="region of interest" description="Disordered" evidence="3">
    <location>
        <begin position="254"/>
        <end position="301"/>
    </location>
</feature>
<feature type="short sequence motif" description="Antp-type hexapeptide">
    <location>
        <begin position="179"/>
        <end position="184"/>
    </location>
</feature>
<feature type="compositionally biased region" description="Polar residues" evidence="3">
    <location>
        <begin position="19"/>
        <end position="38"/>
    </location>
</feature>
<feature type="compositionally biased region" description="Polar residues" evidence="3">
    <location>
        <begin position="55"/>
        <end position="70"/>
    </location>
</feature>
<feature type="compositionally biased region" description="Polar residues" evidence="3">
    <location>
        <begin position="284"/>
        <end position="301"/>
    </location>
</feature>
<organism>
    <name type="scientific">Pan paniscus</name>
    <name type="common">Pygmy chimpanzee</name>
    <name type="synonym">Bonobo</name>
    <dbReference type="NCBI Taxonomy" id="9597"/>
    <lineage>
        <taxon>Eukaryota</taxon>
        <taxon>Metazoa</taxon>
        <taxon>Chordata</taxon>
        <taxon>Craniata</taxon>
        <taxon>Vertebrata</taxon>
        <taxon>Euteleostomi</taxon>
        <taxon>Mammalia</taxon>
        <taxon>Eutheria</taxon>
        <taxon>Euarchontoglires</taxon>
        <taxon>Primates</taxon>
        <taxon>Haplorrhini</taxon>
        <taxon>Catarrhini</taxon>
        <taxon>Hominidae</taxon>
        <taxon>Pan</taxon>
    </lineage>
</organism>
<comment type="function">
    <text evidence="1">Sequence-specific transcription factor which is part of a developmental regulatory system that provides cells with specific positional identities on the anterior-posterior axis. Acts on the anterior body structures (By similarity).</text>
</comment>
<comment type="subcellular location">
    <subcellularLocation>
        <location evidence="2">Nucleus</location>
    </subcellularLocation>
</comment>
<comment type="similarity">
    <text evidence="4">Belongs to the Antp homeobox family. Labial subfamily.</text>
</comment>
<protein>
    <recommendedName>
        <fullName>Homeobox protein Hox-B1</fullName>
    </recommendedName>
</protein>
<accession>A1YG01</accession>
<evidence type="ECO:0000250" key="1"/>
<evidence type="ECO:0000255" key="2">
    <source>
        <dbReference type="PROSITE-ProRule" id="PRU00108"/>
    </source>
</evidence>
<evidence type="ECO:0000256" key="3">
    <source>
        <dbReference type="SAM" id="MobiDB-lite"/>
    </source>
</evidence>
<evidence type="ECO:0000305" key="4"/>
<dbReference type="EMBL" id="DQ977191">
    <property type="protein sequence ID" value="ABM54226.1"/>
    <property type="molecule type" value="Genomic_DNA"/>
</dbReference>
<dbReference type="STRING" id="9597.ENSPPAP00000032487"/>
<dbReference type="eggNOG" id="KOG0489">
    <property type="taxonomic scope" value="Eukaryota"/>
</dbReference>
<dbReference type="Proteomes" id="UP000240080">
    <property type="component" value="Unplaced"/>
</dbReference>
<dbReference type="GO" id="GO:0005634">
    <property type="term" value="C:nucleus"/>
    <property type="evidence" value="ECO:0007669"/>
    <property type="project" value="UniProtKB-SubCell"/>
</dbReference>
<dbReference type="GO" id="GO:0000981">
    <property type="term" value="F:DNA-binding transcription factor activity, RNA polymerase II-specific"/>
    <property type="evidence" value="ECO:0007669"/>
    <property type="project" value="InterPro"/>
</dbReference>
<dbReference type="GO" id="GO:0000978">
    <property type="term" value="F:RNA polymerase II cis-regulatory region sequence-specific DNA binding"/>
    <property type="evidence" value="ECO:0007669"/>
    <property type="project" value="TreeGrafter"/>
</dbReference>
<dbReference type="CDD" id="cd00086">
    <property type="entry name" value="homeodomain"/>
    <property type="match status" value="1"/>
</dbReference>
<dbReference type="FunFam" id="1.10.10.60:FF:000113">
    <property type="entry name" value="homeobox protein Hox-B1"/>
    <property type="match status" value="1"/>
</dbReference>
<dbReference type="Gene3D" id="1.10.10.60">
    <property type="entry name" value="Homeodomain-like"/>
    <property type="match status" value="1"/>
</dbReference>
<dbReference type="InterPro" id="IPR001356">
    <property type="entry name" value="HD"/>
</dbReference>
<dbReference type="InterPro" id="IPR020479">
    <property type="entry name" value="HD_metazoa"/>
</dbReference>
<dbReference type="InterPro" id="IPR017970">
    <property type="entry name" value="Homeobox_CS"/>
</dbReference>
<dbReference type="InterPro" id="IPR009057">
    <property type="entry name" value="Homeodomain-like_sf"/>
</dbReference>
<dbReference type="InterPro" id="IPR046327">
    <property type="entry name" value="HXA1/B1/D1"/>
</dbReference>
<dbReference type="PANTHER" id="PTHR45946:SF5">
    <property type="entry name" value="HOMEOBOX PROTEIN HOX-B1"/>
    <property type="match status" value="1"/>
</dbReference>
<dbReference type="PANTHER" id="PTHR45946">
    <property type="entry name" value="HOMEOBOX PROTEIN ROUGH-RELATED"/>
    <property type="match status" value="1"/>
</dbReference>
<dbReference type="Pfam" id="PF00046">
    <property type="entry name" value="Homeodomain"/>
    <property type="match status" value="1"/>
</dbReference>
<dbReference type="PRINTS" id="PR00024">
    <property type="entry name" value="HOMEOBOX"/>
</dbReference>
<dbReference type="SMART" id="SM00389">
    <property type="entry name" value="HOX"/>
    <property type="match status" value="1"/>
</dbReference>
<dbReference type="SUPFAM" id="SSF46689">
    <property type="entry name" value="Homeodomain-like"/>
    <property type="match status" value="1"/>
</dbReference>
<dbReference type="PROSITE" id="PS00027">
    <property type="entry name" value="HOMEOBOX_1"/>
    <property type="match status" value="1"/>
</dbReference>
<dbReference type="PROSITE" id="PS50071">
    <property type="entry name" value="HOMEOBOX_2"/>
    <property type="match status" value="1"/>
</dbReference>
<sequence length="301" mass="32152">MDYNRMNSFLEYPLCNRGSSAYSAHSAPTSFPPSSAQAVDSYASEGRYGGGLSSPAFQQNSGYPAQQPPSTLGVPFPSSAPSGYAPAACSPSYGPSQYYPLGQSEGDGGYFHPSSYGAQLGGLSDGYGAGGAGPGPYPPQHPPYGNEQTASFAPAYADLLSEDKETPCPSEPNTPTXRTFDWMKVKRNPPKTAKVSEPGLGSPSGLRTNFTTRQLTELEKEFHFNKYLSRARRVEIAATLELNETQVKIWFQNRRMKQKKREREGGRVPPAPPGCPKEAAGDASDQSTCTSPEASPSSVTS</sequence>
<proteinExistence type="inferred from homology"/>
<gene>
    <name type="primary">HOXB1</name>
</gene>
<reference key="1">
    <citation type="submission" date="2006-08" db="EMBL/GenBank/DDBJ databases">
        <title>Positive selection in transcription factor genes on the human lineage.</title>
        <authorList>
            <person name="Nickel G.C."/>
            <person name="Tefft D.L."/>
            <person name="Trevarthen K."/>
            <person name="Funt J."/>
            <person name="Adams M.D."/>
        </authorList>
    </citation>
    <scope>NUCLEOTIDE SEQUENCE [GENOMIC DNA]</scope>
</reference>
<keyword id="KW-0217">Developmental protein</keyword>
<keyword id="KW-0238">DNA-binding</keyword>
<keyword id="KW-0371">Homeobox</keyword>
<keyword id="KW-0539">Nucleus</keyword>
<keyword id="KW-1185">Reference proteome</keyword>
<keyword id="KW-0804">Transcription</keyword>
<keyword id="KW-0805">Transcription regulation</keyword>
<name>HXB1_PANPA</name>